<dbReference type="EMBL" id="X77385">
    <property type="protein sequence ID" value="CAA54564.1"/>
    <property type="molecule type" value="mRNA"/>
</dbReference>
<dbReference type="EMBL" id="AC006585">
    <property type="protein sequence ID" value="AAM15297.1"/>
    <property type="status" value="ALT_SEQ"/>
    <property type="molecule type" value="Genomic_DNA"/>
</dbReference>
<dbReference type="EMBL" id="AC007266">
    <property type="protein sequence ID" value="AAM15475.1"/>
    <property type="status" value="ALT_SEQ"/>
    <property type="molecule type" value="Genomic_DNA"/>
</dbReference>
<dbReference type="EMBL" id="CP002685">
    <property type="protein sequence ID" value="AEC07625.1"/>
    <property type="molecule type" value="Genomic_DNA"/>
</dbReference>
<dbReference type="EMBL" id="CP002685">
    <property type="protein sequence ID" value="AEC07626.1"/>
    <property type="molecule type" value="Genomic_DNA"/>
</dbReference>
<dbReference type="EMBL" id="AY063840">
    <property type="protein sequence ID" value="AAL36196.1"/>
    <property type="molecule type" value="mRNA"/>
</dbReference>
<dbReference type="EMBL" id="AY150410">
    <property type="protein sequence ID" value="AAN12955.1"/>
    <property type="molecule type" value="mRNA"/>
</dbReference>
<dbReference type="EMBL" id="AK117735">
    <property type="protein sequence ID" value="BAC42384.1"/>
    <property type="molecule type" value="mRNA"/>
</dbReference>
<dbReference type="EMBL" id="Z25825">
    <property type="protein sequence ID" value="CAA81067.1"/>
    <property type="molecule type" value="mRNA"/>
</dbReference>
<dbReference type="EMBL" id="Z25549">
    <property type="protein sequence ID" value="CAA80991.1"/>
    <property type="molecule type" value="mRNA"/>
</dbReference>
<dbReference type="PIR" id="S41938">
    <property type="entry name" value="S41938"/>
</dbReference>
<dbReference type="RefSeq" id="NP_001077955.1">
    <molecule id="P40940-2"/>
    <property type="nucleotide sequence ID" value="NM_001084486.1"/>
</dbReference>
<dbReference type="RefSeq" id="NP_850057.1">
    <molecule id="P40940-1"/>
    <property type="nucleotide sequence ID" value="NM_179726.3"/>
</dbReference>
<dbReference type="SMR" id="P40940"/>
<dbReference type="BioGRID" id="2366">
    <property type="interactions" value="3"/>
</dbReference>
<dbReference type="FunCoup" id="P40940">
    <property type="interactions" value="3110"/>
</dbReference>
<dbReference type="IntAct" id="P40940">
    <property type="interactions" value="5"/>
</dbReference>
<dbReference type="STRING" id="3702.P40940"/>
<dbReference type="iPTMnet" id="P40940"/>
<dbReference type="PaxDb" id="3702-AT2G24765.1"/>
<dbReference type="ProteomicsDB" id="245185">
    <molecule id="P40940-1"/>
</dbReference>
<dbReference type="EnsemblPlants" id="AT2G24765.1">
    <molecule id="P40940-1"/>
    <property type="protein sequence ID" value="AT2G24765.1"/>
    <property type="gene ID" value="AT2G24765"/>
</dbReference>
<dbReference type="EnsemblPlants" id="AT2G24765.2">
    <molecule id="P40940-2"/>
    <property type="protein sequence ID" value="AT2G24765.2"/>
    <property type="gene ID" value="AT2G24765"/>
</dbReference>
<dbReference type="GeneID" id="817014"/>
<dbReference type="Gramene" id="AT2G24765.1">
    <molecule id="P40940-1"/>
    <property type="protein sequence ID" value="AT2G24765.1"/>
    <property type="gene ID" value="AT2G24765"/>
</dbReference>
<dbReference type="Gramene" id="AT2G24765.2">
    <molecule id="P40940-2"/>
    <property type="protein sequence ID" value="AT2G24765.2"/>
    <property type="gene ID" value="AT2G24765"/>
</dbReference>
<dbReference type="KEGG" id="ath:AT2G24765"/>
<dbReference type="Araport" id="AT2G24765"/>
<dbReference type="TAIR" id="AT2G24765">
    <property type="gene designation" value="ARF3"/>
</dbReference>
<dbReference type="eggNOG" id="KOG0070">
    <property type="taxonomic scope" value="Eukaryota"/>
</dbReference>
<dbReference type="HOGENOM" id="CLU_040729_9_3_1"/>
<dbReference type="InParanoid" id="P40940"/>
<dbReference type="OMA" id="MGAGMSW"/>
<dbReference type="OrthoDB" id="2011769at2759"/>
<dbReference type="PhylomeDB" id="P40940"/>
<dbReference type="PRO" id="PR:P40940"/>
<dbReference type="Proteomes" id="UP000006548">
    <property type="component" value="Chromosome 2"/>
</dbReference>
<dbReference type="ExpressionAtlas" id="P40940">
    <property type="expression patterns" value="baseline and differential"/>
</dbReference>
<dbReference type="GO" id="GO:0005795">
    <property type="term" value="C:Golgi stack"/>
    <property type="evidence" value="ECO:0000314"/>
    <property type="project" value="TAIR"/>
</dbReference>
<dbReference type="GO" id="GO:0005886">
    <property type="term" value="C:plasma membrane"/>
    <property type="evidence" value="ECO:0007005"/>
    <property type="project" value="TAIR"/>
</dbReference>
<dbReference type="GO" id="GO:0005525">
    <property type="term" value="F:GTP binding"/>
    <property type="evidence" value="ECO:0007669"/>
    <property type="project" value="UniProtKB-KW"/>
</dbReference>
<dbReference type="GO" id="GO:0003924">
    <property type="term" value="F:GTPase activity"/>
    <property type="evidence" value="ECO:0007669"/>
    <property type="project" value="InterPro"/>
</dbReference>
<dbReference type="GO" id="GO:0015031">
    <property type="term" value="P:protein transport"/>
    <property type="evidence" value="ECO:0007669"/>
    <property type="project" value="UniProtKB-KW"/>
</dbReference>
<dbReference type="GO" id="GO:0016192">
    <property type="term" value="P:vesicle-mediated transport"/>
    <property type="evidence" value="ECO:0007669"/>
    <property type="project" value="UniProtKB-KW"/>
</dbReference>
<dbReference type="CDD" id="cd04151">
    <property type="entry name" value="Arl1"/>
    <property type="match status" value="1"/>
</dbReference>
<dbReference type="FunFam" id="3.40.50.300:FF:000510">
    <property type="entry name" value="ADP-ribosylation factor 1"/>
    <property type="match status" value="1"/>
</dbReference>
<dbReference type="Gene3D" id="3.40.50.300">
    <property type="entry name" value="P-loop containing nucleotide triphosphate hydrolases"/>
    <property type="match status" value="1"/>
</dbReference>
<dbReference type="InterPro" id="IPR027417">
    <property type="entry name" value="P-loop_NTPase"/>
</dbReference>
<dbReference type="InterPro" id="IPR005225">
    <property type="entry name" value="Small_GTP-bd"/>
</dbReference>
<dbReference type="InterPro" id="IPR024156">
    <property type="entry name" value="Small_GTPase_ARF"/>
</dbReference>
<dbReference type="InterPro" id="IPR006689">
    <property type="entry name" value="Small_GTPase_ARF/SAR"/>
</dbReference>
<dbReference type="NCBIfam" id="TIGR00231">
    <property type="entry name" value="small_GTP"/>
    <property type="match status" value="1"/>
</dbReference>
<dbReference type="PANTHER" id="PTHR11711">
    <property type="entry name" value="ADP RIBOSYLATION FACTOR-RELATED"/>
    <property type="match status" value="1"/>
</dbReference>
<dbReference type="Pfam" id="PF00025">
    <property type="entry name" value="Arf"/>
    <property type="match status" value="1"/>
</dbReference>
<dbReference type="PRINTS" id="PR00328">
    <property type="entry name" value="SAR1GTPBP"/>
</dbReference>
<dbReference type="SMART" id="SM00177">
    <property type="entry name" value="ARF"/>
    <property type="match status" value="1"/>
</dbReference>
<dbReference type="SMART" id="SM00178">
    <property type="entry name" value="SAR"/>
    <property type="match status" value="1"/>
</dbReference>
<dbReference type="SUPFAM" id="SSF52540">
    <property type="entry name" value="P-loop containing nucleoside triphosphate hydrolases"/>
    <property type="match status" value="1"/>
</dbReference>
<dbReference type="PROSITE" id="PS51417">
    <property type="entry name" value="ARF"/>
    <property type="match status" value="1"/>
</dbReference>
<reference key="1">
    <citation type="journal article" date="1994" name="Plant Physiol.">
        <title>A cDNA encoding a new GTP-binding protein of the ADP-ribosylation factor family from Arabidopsis.</title>
        <authorList>
            <person name="Lebas M."/>
            <person name="Axelos M."/>
        </authorList>
    </citation>
    <scope>NUCLEOTIDE SEQUENCE [MRNA] (ISOFORM 1)</scope>
    <source>
        <strain>cv. Columbia</strain>
    </source>
</reference>
<reference key="2">
    <citation type="journal article" date="1999" name="Nature">
        <title>Sequence and analysis of chromosome 2 of the plant Arabidopsis thaliana.</title>
        <authorList>
            <person name="Lin X."/>
            <person name="Kaul S."/>
            <person name="Rounsley S.D."/>
            <person name="Shea T.P."/>
            <person name="Benito M.-I."/>
            <person name="Town C.D."/>
            <person name="Fujii C.Y."/>
            <person name="Mason T.M."/>
            <person name="Bowman C.L."/>
            <person name="Barnstead M.E."/>
            <person name="Feldblyum T.V."/>
            <person name="Buell C.R."/>
            <person name="Ketchum K.A."/>
            <person name="Lee J.J."/>
            <person name="Ronning C.M."/>
            <person name="Koo H.L."/>
            <person name="Moffat K.S."/>
            <person name="Cronin L.A."/>
            <person name="Shen M."/>
            <person name="Pai G."/>
            <person name="Van Aken S."/>
            <person name="Umayam L."/>
            <person name="Tallon L.J."/>
            <person name="Gill J.E."/>
            <person name="Adams M.D."/>
            <person name="Carrera A.J."/>
            <person name="Creasy T.H."/>
            <person name="Goodman H.M."/>
            <person name="Somerville C.R."/>
            <person name="Copenhaver G.P."/>
            <person name="Preuss D."/>
            <person name="Nierman W.C."/>
            <person name="White O."/>
            <person name="Eisen J.A."/>
            <person name="Salzberg S.L."/>
            <person name="Fraser C.M."/>
            <person name="Venter J.C."/>
        </authorList>
    </citation>
    <scope>NUCLEOTIDE SEQUENCE [LARGE SCALE GENOMIC DNA]</scope>
    <source>
        <strain>cv. Columbia</strain>
    </source>
</reference>
<reference key="3">
    <citation type="journal article" date="2017" name="Plant J.">
        <title>Araport11: a complete reannotation of the Arabidopsis thaliana reference genome.</title>
        <authorList>
            <person name="Cheng C.Y."/>
            <person name="Krishnakumar V."/>
            <person name="Chan A.P."/>
            <person name="Thibaud-Nissen F."/>
            <person name="Schobel S."/>
            <person name="Town C.D."/>
        </authorList>
    </citation>
    <scope>GENOME REANNOTATION</scope>
    <source>
        <strain>cv. Columbia</strain>
    </source>
</reference>
<reference key="4">
    <citation type="journal article" date="2003" name="Science">
        <title>Empirical analysis of transcriptional activity in the Arabidopsis genome.</title>
        <authorList>
            <person name="Yamada K."/>
            <person name="Lim J."/>
            <person name="Dale J.M."/>
            <person name="Chen H."/>
            <person name="Shinn P."/>
            <person name="Palm C.J."/>
            <person name="Southwick A.M."/>
            <person name="Wu H.C."/>
            <person name="Kim C.J."/>
            <person name="Nguyen M."/>
            <person name="Pham P.K."/>
            <person name="Cheuk R.F."/>
            <person name="Karlin-Newmann G."/>
            <person name="Liu S.X."/>
            <person name="Lam B."/>
            <person name="Sakano H."/>
            <person name="Wu T."/>
            <person name="Yu G."/>
            <person name="Miranda M."/>
            <person name="Quach H.L."/>
            <person name="Tripp M."/>
            <person name="Chang C.H."/>
            <person name="Lee J.M."/>
            <person name="Toriumi M.J."/>
            <person name="Chan M.M."/>
            <person name="Tang C.C."/>
            <person name="Onodera C.S."/>
            <person name="Deng J.M."/>
            <person name="Akiyama K."/>
            <person name="Ansari Y."/>
            <person name="Arakawa T."/>
            <person name="Banh J."/>
            <person name="Banno F."/>
            <person name="Bowser L."/>
            <person name="Brooks S.Y."/>
            <person name="Carninci P."/>
            <person name="Chao Q."/>
            <person name="Choy N."/>
            <person name="Enju A."/>
            <person name="Goldsmith A.D."/>
            <person name="Gurjal M."/>
            <person name="Hansen N.F."/>
            <person name="Hayashizaki Y."/>
            <person name="Johnson-Hopson C."/>
            <person name="Hsuan V.W."/>
            <person name="Iida K."/>
            <person name="Karnes M."/>
            <person name="Khan S."/>
            <person name="Koesema E."/>
            <person name="Ishida J."/>
            <person name="Jiang P.X."/>
            <person name="Jones T."/>
            <person name="Kawai J."/>
            <person name="Kamiya A."/>
            <person name="Meyers C."/>
            <person name="Nakajima M."/>
            <person name="Narusaka M."/>
            <person name="Seki M."/>
            <person name="Sakurai T."/>
            <person name="Satou M."/>
            <person name="Tamse R."/>
            <person name="Vaysberg M."/>
            <person name="Wallender E.K."/>
            <person name="Wong C."/>
            <person name="Yamamura Y."/>
            <person name="Yuan S."/>
            <person name="Shinozaki K."/>
            <person name="Davis R.W."/>
            <person name="Theologis A."/>
            <person name="Ecker J.R."/>
        </authorList>
    </citation>
    <scope>NUCLEOTIDE SEQUENCE [LARGE SCALE MRNA] (ISOFORM 1)</scope>
    <source>
        <strain>cv. Columbia</strain>
    </source>
</reference>
<reference key="5">
    <citation type="journal article" date="2002" name="Science">
        <title>Functional annotation of a full-length Arabidopsis cDNA collection.</title>
        <authorList>
            <person name="Seki M."/>
            <person name="Narusaka M."/>
            <person name="Kamiya A."/>
            <person name="Ishida J."/>
            <person name="Satou M."/>
            <person name="Sakurai T."/>
            <person name="Nakajima M."/>
            <person name="Enju A."/>
            <person name="Akiyama K."/>
            <person name="Oono Y."/>
            <person name="Muramatsu M."/>
            <person name="Hayashizaki Y."/>
            <person name="Kawai J."/>
            <person name="Carninci P."/>
            <person name="Itoh M."/>
            <person name="Ishii Y."/>
            <person name="Arakawa T."/>
            <person name="Shibata K."/>
            <person name="Shinagawa A."/>
            <person name="Shinozaki K."/>
        </authorList>
    </citation>
    <scope>NUCLEOTIDE SEQUENCE [LARGE SCALE MRNA] (ISOFORM 1)</scope>
    <source>
        <strain>cv. Columbia</strain>
    </source>
</reference>
<reference key="6">
    <citation type="journal article" date="1996" name="Plant J.">
        <title>Further progress towards a catalogue of all Arabidopsis genes: analysis of a set of 5000 non-redundant ESTs.</title>
        <authorList>
            <person name="Cooke R."/>
            <person name="Raynal M."/>
            <person name="Laudie M."/>
            <person name="Grellet F."/>
            <person name="Delseny M."/>
            <person name="Morris P.-C."/>
            <person name="Guerrier D."/>
            <person name="Giraudat J."/>
            <person name="Quigley F."/>
            <person name="Clabault G."/>
            <person name="Li Y.-F."/>
            <person name="Mache R."/>
            <person name="Krivitzky M."/>
            <person name="Gy I.J.-J."/>
            <person name="Kreis M."/>
            <person name="Lecharny A."/>
            <person name="Parmentier Y."/>
            <person name="Marbach J."/>
            <person name="Fleck J."/>
            <person name="Clement B."/>
            <person name="Philipps G."/>
            <person name="Herve C."/>
            <person name="Bardet C."/>
            <person name="Tremousaygue D."/>
            <person name="Lescure B."/>
            <person name="Lacomme C."/>
            <person name="Roby D."/>
            <person name="Jourjon M.-F."/>
            <person name="Chabrier P."/>
            <person name="Charpenteau J.-L."/>
            <person name="Desprez T."/>
            <person name="Amselem J."/>
            <person name="Chiapello H."/>
            <person name="Hoefte H."/>
        </authorList>
    </citation>
    <scope>NUCLEOTIDE SEQUENCE [LARGE SCALE MRNA] OF 1-79 AND 161-182 (ISOFORM 1)</scope>
    <source>
        <strain>cv. Columbia</strain>
    </source>
</reference>
<reference key="7">
    <citation type="journal article" date="2005" name="Plant J.">
        <title>An Arabidopsis GRIP domain protein locates to the trans-Golgi and binds the small GTPase ARL1.</title>
        <authorList>
            <person name="Latijnhouwers M."/>
            <person name="Hawes C."/>
            <person name="Carvalho C."/>
            <person name="Oparka K."/>
            <person name="Gillingham A.K."/>
            <person name="Boevink P."/>
        </authorList>
    </citation>
    <scope>SUBCELLULAR LOCATION</scope>
    <scope>MUTAGENESIS OF THR-31 AND GLN-71</scope>
    <scope>INTERACTION WITH GRIP</scope>
</reference>
<reference key="8">
    <citation type="journal article" date="2006" name="Plant Mol. Biol.">
        <title>ARL1 plays a role in the binding of the GRIP domain of a peripheral matrix protein to the Golgi apparatus in plant cells.</title>
        <authorList>
            <person name="Stefano G."/>
            <person name="Renna L."/>
            <person name="Hanton S.L."/>
            <person name="Chatre L."/>
            <person name="Haas T.A."/>
            <person name="Brandizzi F."/>
        </authorList>
    </citation>
    <scope>SUBCELLULAR LOCATION</scope>
    <scope>MUTAGENESIS OF GLY-2; THR-31; PHE-51; GLN-71 AND TYR-81</scope>
    <scope>MYRISTOYLATION AT GLY-2</scope>
    <scope>INTERACTION WITH GRIP</scope>
</reference>
<gene>
    <name type="primary">ARF3</name>
    <name type="synonym">ARL1</name>
    <name type="ordered locus">At2g24765</name>
    <name type="ORF">F27A10.8</name>
    <name type="ORF">F27C12.31</name>
</gene>
<comment type="function">
    <text>GTP-binding protein involved in protein trafficking; may modulate vesicle budding and uncoating within the Golgi apparatus.</text>
</comment>
<comment type="subunit">
    <text evidence="2 3">Interacts with GRIP; but preferentially when bound to GTP.</text>
</comment>
<comment type="interaction">
    <interactant intactId="EBI-1537890">
        <id>P40940</id>
    </interactant>
    <interactant intactId="EBI-1537908">
        <id>Q8S2T0</id>
        <label>GRIP</label>
    </interactant>
    <organismsDiffer>false</organismsDiffer>
    <experiments>5</experiments>
</comment>
<comment type="subcellular location">
    <subcellularLocation>
        <location evidence="2 3">Golgi apparatus</location>
    </subcellularLocation>
</comment>
<comment type="alternative products">
    <event type="alternative splicing"/>
    <isoform>
        <id>P40940-1</id>
        <name>1</name>
        <sequence type="displayed"/>
    </isoform>
    <isoform>
        <id>P40940-2</id>
        <name>2</name>
        <sequence type="described" ref="VSP_035207 VSP_035208"/>
    </isoform>
</comment>
<comment type="similarity">
    <text evidence="4">Belongs to the small GTPase superfamily. Arf family.</text>
</comment>
<comment type="sequence caution" evidence="4">
    <conflict type="erroneous gene model prediction">
        <sequence resource="EMBL-CDS" id="AAM15297"/>
    </conflict>
</comment>
<comment type="sequence caution" evidence="4">
    <conflict type="erroneous gene model prediction">
        <sequence resource="EMBL-CDS" id="AAM15475"/>
    </conflict>
</comment>
<evidence type="ECO:0000250" key="1"/>
<evidence type="ECO:0000269" key="2">
    <source>
    </source>
</evidence>
<evidence type="ECO:0000269" key="3">
    <source>
    </source>
</evidence>
<evidence type="ECO:0000305" key="4"/>
<evidence type="ECO:0000305" key="5">
    <source>
    </source>
</evidence>
<protein>
    <recommendedName>
        <fullName>ADP-ribosylation factor 3</fullName>
        <shortName>AtARF3</shortName>
    </recommendedName>
    <alternativeName>
        <fullName>Protein ARF-LIKE 1</fullName>
        <shortName>AtARL1</shortName>
    </alternativeName>
</protein>
<proteinExistence type="evidence at protein level"/>
<feature type="initiator methionine" description="Removed" evidence="5">
    <location>
        <position position="1"/>
    </location>
</feature>
<feature type="chain" id="PRO_0000207427" description="ADP-ribosylation factor 3">
    <location>
        <begin position="2"/>
        <end position="182"/>
    </location>
</feature>
<feature type="binding site" evidence="1">
    <location>
        <begin position="24"/>
        <end position="31"/>
    </location>
    <ligand>
        <name>GTP</name>
        <dbReference type="ChEBI" id="CHEBI:37565"/>
    </ligand>
</feature>
<feature type="binding site" evidence="1">
    <location>
        <begin position="67"/>
        <end position="71"/>
    </location>
    <ligand>
        <name>GTP</name>
        <dbReference type="ChEBI" id="CHEBI:37565"/>
    </ligand>
</feature>
<feature type="binding site" evidence="1">
    <location>
        <begin position="126"/>
        <end position="129"/>
    </location>
    <ligand>
        <name>GTP</name>
        <dbReference type="ChEBI" id="CHEBI:37565"/>
    </ligand>
</feature>
<feature type="lipid moiety-binding region" description="N-myristoyl glycine" evidence="5">
    <location>
        <position position="2"/>
    </location>
</feature>
<feature type="splice variant" id="VSP_035207" description="In isoform 2." evidence="4">
    <original>DLPGALD</original>
    <variation>KPWSCIR</variation>
    <location>
        <begin position="129"/>
        <end position="135"/>
    </location>
</feature>
<feature type="splice variant" id="VSP_035208" description="In isoform 2." evidence="4">
    <location>
        <begin position="136"/>
        <end position="182"/>
    </location>
</feature>
<feature type="mutagenesis site" description="Loss of Golgi targeting." evidence="3">
    <original>G</original>
    <variation>A</variation>
    <location>
        <position position="2"/>
    </location>
</feature>
<feature type="mutagenesis site" description="GDP-restricted form; no effect on targeting." evidence="2 3">
    <original>T</original>
    <variation>N</variation>
    <location>
        <position position="31"/>
    </location>
</feature>
<feature type="mutagenesis site" description="Reduced interaction with GRIP, but no effect on targeting." evidence="3">
    <original>F</original>
    <variation>G</variation>
    <location>
        <position position="51"/>
    </location>
</feature>
<feature type="mutagenesis site" description="GTP-restriced form; no effect on targeting." evidence="2 3">
    <original>Q</original>
    <variation>L</variation>
    <location>
        <position position="71"/>
    </location>
</feature>
<feature type="mutagenesis site" description="Reduced interaction with GRIP, but no effect on targeting." evidence="3">
    <original>Y</original>
    <variation>G</variation>
    <location>
        <position position="81"/>
    </location>
</feature>
<accession>P40940</accession>
<accession>A8MRA0</accession>
<accession>Q541X9</accession>
<organism>
    <name type="scientific">Arabidopsis thaliana</name>
    <name type="common">Mouse-ear cress</name>
    <dbReference type="NCBI Taxonomy" id="3702"/>
    <lineage>
        <taxon>Eukaryota</taxon>
        <taxon>Viridiplantae</taxon>
        <taxon>Streptophyta</taxon>
        <taxon>Embryophyta</taxon>
        <taxon>Tracheophyta</taxon>
        <taxon>Spermatophyta</taxon>
        <taxon>Magnoliopsida</taxon>
        <taxon>eudicotyledons</taxon>
        <taxon>Gunneridae</taxon>
        <taxon>Pentapetalae</taxon>
        <taxon>rosids</taxon>
        <taxon>malvids</taxon>
        <taxon>Brassicales</taxon>
        <taxon>Brassicaceae</taxon>
        <taxon>Camelineae</taxon>
        <taxon>Arabidopsis</taxon>
    </lineage>
</organism>
<keyword id="KW-0025">Alternative splicing</keyword>
<keyword id="KW-0931">ER-Golgi transport</keyword>
<keyword id="KW-0333">Golgi apparatus</keyword>
<keyword id="KW-0342">GTP-binding</keyword>
<keyword id="KW-0449">Lipoprotein</keyword>
<keyword id="KW-0519">Myristate</keyword>
<keyword id="KW-0547">Nucleotide-binding</keyword>
<keyword id="KW-0653">Protein transport</keyword>
<keyword id="KW-1185">Reference proteome</keyword>
<keyword id="KW-0813">Transport</keyword>
<sequence length="182" mass="20242">MGILFTRMFSSVFGNKEARILVLGLDNAGKTTILYRLQMGEVVSTIPTIGFNVETVQYNNIKFQVWDLGGQTSIRPYWRCYFPNTQAVIYVVDSSDTDRIGVAKEEFHAILEEDELKGAVVLIFANKQDLPGALDDAAVTEALELHKIKSRQWAIFKTCAVKGEGLFEGLDWLSNTLKSGSG</sequence>
<name>ARF3_ARATH</name>